<evidence type="ECO:0000255" key="1">
    <source>
        <dbReference type="HAMAP-Rule" id="MF_01306"/>
    </source>
</evidence>
<evidence type="ECO:0000305" key="2"/>
<dbReference type="EMBL" id="CP000826">
    <property type="protein sequence ID" value="ABV43614.1"/>
    <property type="molecule type" value="Genomic_DNA"/>
</dbReference>
<dbReference type="SMR" id="A8GKH4"/>
<dbReference type="STRING" id="399741.Spro_4520"/>
<dbReference type="KEGG" id="spe:Spro_4520"/>
<dbReference type="eggNOG" id="COG0522">
    <property type="taxonomic scope" value="Bacteria"/>
</dbReference>
<dbReference type="HOGENOM" id="CLU_092403_0_2_6"/>
<dbReference type="OrthoDB" id="9803672at2"/>
<dbReference type="GO" id="GO:0015935">
    <property type="term" value="C:small ribosomal subunit"/>
    <property type="evidence" value="ECO:0007669"/>
    <property type="project" value="InterPro"/>
</dbReference>
<dbReference type="GO" id="GO:0019843">
    <property type="term" value="F:rRNA binding"/>
    <property type="evidence" value="ECO:0007669"/>
    <property type="project" value="UniProtKB-UniRule"/>
</dbReference>
<dbReference type="GO" id="GO:0003735">
    <property type="term" value="F:structural constituent of ribosome"/>
    <property type="evidence" value="ECO:0007669"/>
    <property type="project" value="InterPro"/>
</dbReference>
<dbReference type="GO" id="GO:0042274">
    <property type="term" value="P:ribosomal small subunit biogenesis"/>
    <property type="evidence" value="ECO:0007669"/>
    <property type="project" value="TreeGrafter"/>
</dbReference>
<dbReference type="GO" id="GO:0006412">
    <property type="term" value="P:translation"/>
    <property type="evidence" value="ECO:0007669"/>
    <property type="project" value="UniProtKB-UniRule"/>
</dbReference>
<dbReference type="CDD" id="cd00165">
    <property type="entry name" value="S4"/>
    <property type="match status" value="1"/>
</dbReference>
<dbReference type="FunFam" id="1.10.1050.10:FF:000001">
    <property type="entry name" value="30S ribosomal protein S4"/>
    <property type="match status" value="1"/>
</dbReference>
<dbReference type="FunFam" id="3.10.290.10:FF:000001">
    <property type="entry name" value="30S ribosomal protein S4"/>
    <property type="match status" value="1"/>
</dbReference>
<dbReference type="Gene3D" id="1.10.1050.10">
    <property type="entry name" value="Ribosomal Protein S4 Delta 41, Chain A, domain 1"/>
    <property type="match status" value="1"/>
</dbReference>
<dbReference type="Gene3D" id="3.10.290.10">
    <property type="entry name" value="RNA-binding S4 domain"/>
    <property type="match status" value="1"/>
</dbReference>
<dbReference type="HAMAP" id="MF_01306_B">
    <property type="entry name" value="Ribosomal_uS4_B"/>
    <property type="match status" value="1"/>
</dbReference>
<dbReference type="InterPro" id="IPR022801">
    <property type="entry name" value="Ribosomal_uS4"/>
</dbReference>
<dbReference type="InterPro" id="IPR005709">
    <property type="entry name" value="Ribosomal_uS4_bac-type"/>
</dbReference>
<dbReference type="InterPro" id="IPR018079">
    <property type="entry name" value="Ribosomal_uS4_CS"/>
</dbReference>
<dbReference type="InterPro" id="IPR001912">
    <property type="entry name" value="Ribosomal_uS4_N"/>
</dbReference>
<dbReference type="InterPro" id="IPR002942">
    <property type="entry name" value="S4_RNA-bd"/>
</dbReference>
<dbReference type="InterPro" id="IPR036986">
    <property type="entry name" value="S4_RNA-bd_sf"/>
</dbReference>
<dbReference type="NCBIfam" id="NF003717">
    <property type="entry name" value="PRK05327.1"/>
    <property type="match status" value="1"/>
</dbReference>
<dbReference type="NCBIfam" id="TIGR01017">
    <property type="entry name" value="rpsD_bact"/>
    <property type="match status" value="1"/>
</dbReference>
<dbReference type="PANTHER" id="PTHR11831">
    <property type="entry name" value="30S 40S RIBOSOMAL PROTEIN"/>
    <property type="match status" value="1"/>
</dbReference>
<dbReference type="PANTHER" id="PTHR11831:SF4">
    <property type="entry name" value="SMALL RIBOSOMAL SUBUNIT PROTEIN US4M"/>
    <property type="match status" value="1"/>
</dbReference>
<dbReference type="Pfam" id="PF00163">
    <property type="entry name" value="Ribosomal_S4"/>
    <property type="match status" value="1"/>
</dbReference>
<dbReference type="Pfam" id="PF01479">
    <property type="entry name" value="S4"/>
    <property type="match status" value="1"/>
</dbReference>
<dbReference type="SMART" id="SM01390">
    <property type="entry name" value="Ribosomal_S4"/>
    <property type="match status" value="1"/>
</dbReference>
<dbReference type="SMART" id="SM00363">
    <property type="entry name" value="S4"/>
    <property type="match status" value="1"/>
</dbReference>
<dbReference type="SUPFAM" id="SSF55174">
    <property type="entry name" value="Alpha-L RNA-binding motif"/>
    <property type="match status" value="1"/>
</dbReference>
<dbReference type="PROSITE" id="PS00632">
    <property type="entry name" value="RIBOSOMAL_S4"/>
    <property type="match status" value="1"/>
</dbReference>
<dbReference type="PROSITE" id="PS50889">
    <property type="entry name" value="S4"/>
    <property type="match status" value="1"/>
</dbReference>
<name>RS4_SERP5</name>
<gene>
    <name evidence="1" type="primary">rpsD</name>
    <name type="ordered locus">Spro_4520</name>
</gene>
<proteinExistence type="inferred from homology"/>
<sequence>MARYLGPKLKLSRREGTDLFLKSGVRAIDTKCKIEQPPGQHGARKPRLSDYGVQLREKQKVRRMYGVLERQFRNYYKEAARLKGNTGANLLQLLEGRLDNVVYRMGFGATRSESRQLVSHKAIMVNGRVVNIASYQVSPNDVVSIREKAKKQSRVKASLELAEQREKPTWLEVDAAKMEGVFKRMPERTDLSADINEHLIVELYSK</sequence>
<feature type="chain" id="PRO_0000322331" description="Small ribosomal subunit protein uS4">
    <location>
        <begin position="1"/>
        <end position="206"/>
    </location>
</feature>
<feature type="domain" description="S4 RNA-binding" evidence="1">
    <location>
        <begin position="96"/>
        <end position="156"/>
    </location>
</feature>
<reference key="1">
    <citation type="submission" date="2007-09" db="EMBL/GenBank/DDBJ databases">
        <title>Complete sequence of chromosome of Serratia proteamaculans 568.</title>
        <authorList>
            <consortium name="US DOE Joint Genome Institute"/>
            <person name="Copeland A."/>
            <person name="Lucas S."/>
            <person name="Lapidus A."/>
            <person name="Barry K."/>
            <person name="Glavina del Rio T."/>
            <person name="Dalin E."/>
            <person name="Tice H."/>
            <person name="Pitluck S."/>
            <person name="Chain P."/>
            <person name="Malfatti S."/>
            <person name="Shin M."/>
            <person name="Vergez L."/>
            <person name="Schmutz J."/>
            <person name="Larimer F."/>
            <person name="Land M."/>
            <person name="Hauser L."/>
            <person name="Kyrpides N."/>
            <person name="Kim E."/>
            <person name="Taghavi S."/>
            <person name="Newman L."/>
            <person name="Vangronsveld J."/>
            <person name="van der Lelie D."/>
            <person name="Richardson P."/>
        </authorList>
    </citation>
    <scope>NUCLEOTIDE SEQUENCE [LARGE SCALE GENOMIC DNA]</scope>
    <source>
        <strain>568</strain>
    </source>
</reference>
<comment type="function">
    <text evidence="1">One of the primary rRNA binding proteins, it binds directly to 16S rRNA where it nucleates assembly of the body of the 30S subunit.</text>
</comment>
<comment type="function">
    <text evidence="1">With S5 and S12 plays an important role in translational accuracy.</text>
</comment>
<comment type="subunit">
    <text evidence="1">Part of the 30S ribosomal subunit. Contacts protein S5. The interaction surface between S4 and S5 is involved in control of translational fidelity.</text>
</comment>
<comment type="similarity">
    <text evidence="1">Belongs to the universal ribosomal protein uS4 family.</text>
</comment>
<organism>
    <name type="scientific">Serratia proteamaculans (strain 568)</name>
    <dbReference type="NCBI Taxonomy" id="399741"/>
    <lineage>
        <taxon>Bacteria</taxon>
        <taxon>Pseudomonadati</taxon>
        <taxon>Pseudomonadota</taxon>
        <taxon>Gammaproteobacteria</taxon>
        <taxon>Enterobacterales</taxon>
        <taxon>Yersiniaceae</taxon>
        <taxon>Serratia</taxon>
    </lineage>
</organism>
<keyword id="KW-0687">Ribonucleoprotein</keyword>
<keyword id="KW-0689">Ribosomal protein</keyword>
<keyword id="KW-0694">RNA-binding</keyword>
<keyword id="KW-0699">rRNA-binding</keyword>
<accession>A8GKH4</accession>
<protein>
    <recommendedName>
        <fullName evidence="1">Small ribosomal subunit protein uS4</fullName>
    </recommendedName>
    <alternativeName>
        <fullName evidence="2">30S ribosomal protein S4</fullName>
    </alternativeName>
</protein>